<dbReference type="EC" id="2.1.3.15" evidence="1"/>
<dbReference type="EMBL" id="CP000020">
    <property type="protein sequence ID" value="AAW86190.1"/>
    <property type="molecule type" value="Genomic_DNA"/>
</dbReference>
<dbReference type="RefSeq" id="WP_011262249.1">
    <property type="nucleotide sequence ID" value="NC_006840.2"/>
</dbReference>
<dbReference type="RefSeq" id="YP_205078.1">
    <property type="nucleotide sequence ID" value="NC_006840.2"/>
</dbReference>
<dbReference type="SMR" id="Q5E456"/>
<dbReference type="STRING" id="312309.VF_1695"/>
<dbReference type="EnsemblBacteria" id="AAW86190">
    <property type="protein sequence ID" value="AAW86190"/>
    <property type="gene ID" value="VF_1695"/>
</dbReference>
<dbReference type="GeneID" id="54164390"/>
<dbReference type="KEGG" id="vfi:VF_1695"/>
<dbReference type="PATRIC" id="fig|312309.11.peg.1717"/>
<dbReference type="eggNOG" id="COG0777">
    <property type="taxonomic scope" value="Bacteria"/>
</dbReference>
<dbReference type="HOGENOM" id="CLU_015486_1_0_6"/>
<dbReference type="OrthoDB" id="9772975at2"/>
<dbReference type="UniPathway" id="UPA00655">
    <property type="reaction ID" value="UER00711"/>
</dbReference>
<dbReference type="Proteomes" id="UP000000537">
    <property type="component" value="Chromosome I"/>
</dbReference>
<dbReference type="GO" id="GO:0009329">
    <property type="term" value="C:acetate CoA-transferase complex"/>
    <property type="evidence" value="ECO:0007669"/>
    <property type="project" value="TreeGrafter"/>
</dbReference>
<dbReference type="GO" id="GO:0003989">
    <property type="term" value="F:acetyl-CoA carboxylase activity"/>
    <property type="evidence" value="ECO:0007669"/>
    <property type="project" value="InterPro"/>
</dbReference>
<dbReference type="GO" id="GO:0005524">
    <property type="term" value="F:ATP binding"/>
    <property type="evidence" value="ECO:0007669"/>
    <property type="project" value="UniProtKB-KW"/>
</dbReference>
<dbReference type="GO" id="GO:0016743">
    <property type="term" value="F:carboxyl- or carbamoyltransferase activity"/>
    <property type="evidence" value="ECO:0007669"/>
    <property type="project" value="UniProtKB-UniRule"/>
</dbReference>
<dbReference type="GO" id="GO:0008270">
    <property type="term" value="F:zinc ion binding"/>
    <property type="evidence" value="ECO:0007669"/>
    <property type="project" value="UniProtKB-UniRule"/>
</dbReference>
<dbReference type="GO" id="GO:0006633">
    <property type="term" value="P:fatty acid biosynthetic process"/>
    <property type="evidence" value="ECO:0007669"/>
    <property type="project" value="UniProtKB-KW"/>
</dbReference>
<dbReference type="GO" id="GO:2001295">
    <property type="term" value="P:malonyl-CoA biosynthetic process"/>
    <property type="evidence" value="ECO:0007669"/>
    <property type="project" value="UniProtKB-UniRule"/>
</dbReference>
<dbReference type="Gene3D" id="3.90.226.10">
    <property type="entry name" value="2-enoyl-CoA Hydratase, Chain A, domain 1"/>
    <property type="match status" value="1"/>
</dbReference>
<dbReference type="HAMAP" id="MF_01395">
    <property type="entry name" value="AcetylCoA_CT_beta"/>
    <property type="match status" value="1"/>
</dbReference>
<dbReference type="InterPro" id="IPR034733">
    <property type="entry name" value="AcCoA_carboxyl_beta"/>
</dbReference>
<dbReference type="InterPro" id="IPR000438">
    <property type="entry name" value="Acetyl_CoA_COase_Trfase_b_su"/>
</dbReference>
<dbReference type="InterPro" id="IPR029045">
    <property type="entry name" value="ClpP/crotonase-like_dom_sf"/>
</dbReference>
<dbReference type="InterPro" id="IPR011762">
    <property type="entry name" value="COA_CT_N"/>
</dbReference>
<dbReference type="InterPro" id="IPR041010">
    <property type="entry name" value="Znf-ACC"/>
</dbReference>
<dbReference type="NCBIfam" id="TIGR00515">
    <property type="entry name" value="accD"/>
    <property type="match status" value="1"/>
</dbReference>
<dbReference type="PANTHER" id="PTHR42995">
    <property type="entry name" value="ACETYL-COENZYME A CARBOXYLASE CARBOXYL TRANSFERASE SUBUNIT BETA, CHLOROPLASTIC"/>
    <property type="match status" value="1"/>
</dbReference>
<dbReference type="PANTHER" id="PTHR42995:SF5">
    <property type="entry name" value="ACETYL-COENZYME A CARBOXYLASE CARBOXYL TRANSFERASE SUBUNIT BETA, CHLOROPLASTIC"/>
    <property type="match status" value="1"/>
</dbReference>
<dbReference type="Pfam" id="PF01039">
    <property type="entry name" value="Carboxyl_trans"/>
    <property type="match status" value="1"/>
</dbReference>
<dbReference type="Pfam" id="PF17848">
    <property type="entry name" value="Zn_ribbon_ACC"/>
    <property type="match status" value="1"/>
</dbReference>
<dbReference type="PRINTS" id="PR01070">
    <property type="entry name" value="ACCCTRFRASEB"/>
</dbReference>
<dbReference type="SUPFAM" id="SSF52096">
    <property type="entry name" value="ClpP/crotonase"/>
    <property type="match status" value="1"/>
</dbReference>
<dbReference type="PROSITE" id="PS50980">
    <property type="entry name" value="COA_CT_NTER"/>
    <property type="match status" value="1"/>
</dbReference>
<gene>
    <name evidence="1" type="primary">accD</name>
    <name type="ordered locus">VF_1695</name>
</gene>
<reference key="1">
    <citation type="journal article" date="2005" name="Proc. Natl. Acad. Sci. U.S.A.">
        <title>Complete genome sequence of Vibrio fischeri: a symbiotic bacterium with pathogenic congeners.</title>
        <authorList>
            <person name="Ruby E.G."/>
            <person name="Urbanowski M."/>
            <person name="Campbell J."/>
            <person name="Dunn A."/>
            <person name="Faini M."/>
            <person name="Gunsalus R."/>
            <person name="Lostroh P."/>
            <person name="Lupp C."/>
            <person name="McCann J."/>
            <person name="Millikan D."/>
            <person name="Schaefer A."/>
            <person name="Stabb E."/>
            <person name="Stevens A."/>
            <person name="Visick K."/>
            <person name="Whistler C."/>
            <person name="Greenberg E.P."/>
        </authorList>
    </citation>
    <scope>NUCLEOTIDE SEQUENCE [LARGE SCALE GENOMIC DNA]</scope>
    <source>
        <strain>ATCC 700601 / ES114</strain>
    </source>
</reference>
<sequence>MSWLEKIFNTSNIVSSRKASIPEGVWTKCTSCEQVLYSAELERNLEVCPKCDHHMRMKARKRLETFLDAEGRVEIGAELEPKDVLKFKDSKRYKDRISAAQKSSEETDALVVMKGTLLELPVVACAFEFSFMGGSMGSVVGARFVKAVDAAIENNCPLVCFSASGGARMQEALMSLMQMAKTSAALARLSRKGLPFFSVLTDPTMGGVSASLAMLGDINIGEPKALIGFAGRRVIEQTVREDLPEGFQRSEFLLEHGAIDMIVDRREMRQRIGGLMAKMTNQESPLVVPVDGSH</sequence>
<protein>
    <recommendedName>
        <fullName evidence="1">Acetyl-coenzyme A carboxylase carboxyl transferase subunit beta</fullName>
        <shortName evidence="1">ACCase subunit beta</shortName>
        <shortName evidence="1">Acetyl-CoA carboxylase carboxyltransferase subunit beta</shortName>
        <ecNumber evidence="1">2.1.3.15</ecNumber>
    </recommendedName>
</protein>
<accession>Q5E456</accession>
<name>ACCD_ALIF1</name>
<comment type="function">
    <text evidence="1">Component of the acetyl coenzyme A carboxylase (ACC) complex. Biotin carboxylase (BC) catalyzes the carboxylation of biotin on its carrier protein (BCCP) and then the CO(2) group is transferred by the transcarboxylase to acetyl-CoA to form malonyl-CoA.</text>
</comment>
<comment type="catalytic activity">
    <reaction evidence="1">
        <text>N(6)-carboxybiotinyl-L-lysyl-[protein] + acetyl-CoA = N(6)-biotinyl-L-lysyl-[protein] + malonyl-CoA</text>
        <dbReference type="Rhea" id="RHEA:54728"/>
        <dbReference type="Rhea" id="RHEA-COMP:10505"/>
        <dbReference type="Rhea" id="RHEA-COMP:10506"/>
        <dbReference type="ChEBI" id="CHEBI:57288"/>
        <dbReference type="ChEBI" id="CHEBI:57384"/>
        <dbReference type="ChEBI" id="CHEBI:83144"/>
        <dbReference type="ChEBI" id="CHEBI:83145"/>
        <dbReference type="EC" id="2.1.3.15"/>
    </reaction>
</comment>
<comment type="cofactor">
    <cofactor evidence="1">
        <name>Zn(2+)</name>
        <dbReference type="ChEBI" id="CHEBI:29105"/>
    </cofactor>
    <text evidence="1">Binds 1 zinc ion per subunit.</text>
</comment>
<comment type="pathway">
    <text evidence="1">Lipid metabolism; malonyl-CoA biosynthesis; malonyl-CoA from acetyl-CoA: step 1/1.</text>
</comment>
<comment type="subunit">
    <text evidence="1">Acetyl-CoA carboxylase is a heterohexamer composed of biotin carboxyl carrier protein (AccB), biotin carboxylase (AccC) and two subunits each of ACCase subunit alpha (AccA) and ACCase subunit beta (AccD).</text>
</comment>
<comment type="subcellular location">
    <subcellularLocation>
        <location evidence="1">Cytoplasm</location>
    </subcellularLocation>
</comment>
<comment type="similarity">
    <text evidence="1">Belongs to the AccD/PCCB family.</text>
</comment>
<organism>
    <name type="scientific">Aliivibrio fischeri (strain ATCC 700601 / ES114)</name>
    <name type="common">Vibrio fischeri</name>
    <dbReference type="NCBI Taxonomy" id="312309"/>
    <lineage>
        <taxon>Bacteria</taxon>
        <taxon>Pseudomonadati</taxon>
        <taxon>Pseudomonadota</taxon>
        <taxon>Gammaproteobacteria</taxon>
        <taxon>Vibrionales</taxon>
        <taxon>Vibrionaceae</taxon>
        <taxon>Aliivibrio</taxon>
    </lineage>
</organism>
<proteinExistence type="inferred from homology"/>
<evidence type="ECO:0000255" key="1">
    <source>
        <dbReference type="HAMAP-Rule" id="MF_01395"/>
    </source>
</evidence>
<evidence type="ECO:0000255" key="2">
    <source>
        <dbReference type="PROSITE-ProRule" id="PRU01136"/>
    </source>
</evidence>
<feature type="chain" id="PRO_0000359086" description="Acetyl-coenzyme A carboxylase carboxyl transferase subunit beta">
    <location>
        <begin position="1"/>
        <end position="294"/>
    </location>
</feature>
<feature type="domain" description="CoA carboxyltransferase N-terminal" evidence="2">
    <location>
        <begin position="25"/>
        <end position="294"/>
    </location>
</feature>
<feature type="zinc finger region" description="C4-type" evidence="1">
    <location>
        <begin position="29"/>
        <end position="51"/>
    </location>
</feature>
<feature type="binding site" evidence="1">
    <location>
        <position position="29"/>
    </location>
    <ligand>
        <name>Zn(2+)</name>
        <dbReference type="ChEBI" id="CHEBI:29105"/>
    </ligand>
</feature>
<feature type="binding site" evidence="1">
    <location>
        <position position="32"/>
    </location>
    <ligand>
        <name>Zn(2+)</name>
        <dbReference type="ChEBI" id="CHEBI:29105"/>
    </ligand>
</feature>
<feature type="binding site" evidence="1">
    <location>
        <position position="48"/>
    </location>
    <ligand>
        <name>Zn(2+)</name>
        <dbReference type="ChEBI" id="CHEBI:29105"/>
    </ligand>
</feature>
<feature type="binding site" evidence="1">
    <location>
        <position position="51"/>
    </location>
    <ligand>
        <name>Zn(2+)</name>
        <dbReference type="ChEBI" id="CHEBI:29105"/>
    </ligand>
</feature>
<keyword id="KW-0067">ATP-binding</keyword>
<keyword id="KW-0963">Cytoplasm</keyword>
<keyword id="KW-0275">Fatty acid biosynthesis</keyword>
<keyword id="KW-0276">Fatty acid metabolism</keyword>
<keyword id="KW-0444">Lipid biosynthesis</keyword>
<keyword id="KW-0443">Lipid metabolism</keyword>
<keyword id="KW-0479">Metal-binding</keyword>
<keyword id="KW-0547">Nucleotide-binding</keyword>
<keyword id="KW-1185">Reference proteome</keyword>
<keyword id="KW-0808">Transferase</keyword>
<keyword id="KW-0862">Zinc</keyword>
<keyword id="KW-0863">Zinc-finger</keyword>